<protein>
    <recommendedName>
        <fullName>Probable high-affinity nitrate transporter 2.4</fullName>
        <shortName>OsNRT2.4</shortName>
    </recommendedName>
</protein>
<reference key="1">
    <citation type="journal article" date="2002" name="Nature">
        <title>The genome sequence and structure of rice chromosome 1.</title>
        <authorList>
            <person name="Sasaki T."/>
            <person name="Matsumoto T."/>
            <person name="Yamamoto K."/>
            <person name="Sakata K."/>
            <person name="Baba T."/>
            <person name="Katayose Y."/>
            <person name="Wu J."/>
            <person name="Niimura Y."/>
            <person name="Cheng Z."/>
            <person name="Nagamura Y."/>
            <person name="Antonio B.A."/>
            <person name="Kanamori H."/>
            <person name="Hosokawa S."/>
            <person name="Masukawa M."/>
            <person name="Arikawa K."/>
            <person name="Chiden Y."/>
            <person name="Hayashi M."/>
            <person name="Okamoto M."/>
            <person name="Ando T."/>
            <person name="Aoki H."/>
            <person name="Arita K."/>
            <person name="Hamada M."/>
            <person name="Harada C."/>
            <person name="Hijishita S."/>
            <person name="Honda M."/>
            <person name="Ichikawa Y."/>
            <person name="Idonuma A."/>
            <person name="Iijima M."/>
            <person name="Ikeda M."/>
            <person name="Ikeno M."/>
            <person name="Ito S."/>
            <person name="Ito T."/>
            <person name="Ito Y."/>
            <person name="Ito Y."/>
            <person name="Iwabuchi A."/>
            <person name="Kamiya K."/>
            <person name="Karasawa W."/>
            <person name="Katagiri S."/>
            <person name="Kikuta A."/>
            <person name="Kobayashi N."/>
            <person name="Kono I."/>
            <person name="Machita K."/>
            <person name="Maehara T."/>
            <person name="Mizuno H."/>
            <person name="Mizubayashi T."/>
            <person name="Mukai Y."/>
            <person name="Nagasaki H."/>
            <person name="Nakashima M."/>
            <person name="Nakama Y."/>
            <person name="Nakamichi Y."/>
            <person name="Nakamura M."/>
            <person name="Namiki N."/>
            <person name="Negishi M."/>
            <person name="Ohta I."/>
            <person name="Ono N."/>
            <person name="Saji S."/>
            <person name="Sakai K."/>
            <person name="Shibata M."/>
            <person name="Shimokawa T."/>
            <person name="Shomura A."/>
            <person name="Song J."/>
            <person name="Takazaki Y."/>
            <person name="Terasawa K."/>
            <person name="Tsuji K."/>
            <person name="Waki K."/>
            <person name="Yamagata H."/>
            <person name="Yamane H."/>
            <person name="Yoshiki S."/>
            <person name="Yoshihara R."/>
            <person name="Yukawa K."/>
            <person name="Zhong H."/>
            <person name="Iwama H."/>
            <person name="Endo T."/>
            <person name="Ito H."/>
            <person name="Hahn J.H."/>
            <person name="Kim H.-I."/>
            <person name="Eun M.-Y."/>
            <person name="Yano M."/>
            <person name="Jiang J."/>
            <person name="Gojobori T."/>
        </authorList>
    </citation>
    <scope>NUCLEOTIDE SEQUENCE [LARGE SCALE GENOMIC DNA]</scope>
    <source>
        <strain>cv. Nipponbare</strain>
    </source>
</reference>
<reference key="2">
    <citation type="journal article" date="2005" name="Nature">
        <title>The map-based sequence of the rice genome.</title>
        <authorList>
            <consortium name="International rice genome sequencing project (IRGSP)"/>
        </authorList>
    </citation>
    <scope>NUCLEOTIDE SEQUENCE [LARGE SCALE GENOMIC DNA]</scope>
    <source>
        <strain>cv. Nipponbare</strain>
    </source>
</reference>
<reference key="3">
    <citation type="journal article" date="2008" name="Nucleic Acids Res.">
        <title>The rice annotation project database (RAP-DB): 2008 update.</title>
        <authorList>
            <consortium name="The rice annotation project (RAP)"/>
        </authorList>
    </citation>
    <scope>GENOME REANNOTATION</scope>
    <source>
        <strain>cv. Nipponbare</strain>
    </source>
</reference>
<reference key="4">
    <citation type="journal article" date="2013" name="Rice">
        <title>Improvement of the Oryza sativa Nipponbare reference genome using next generation sequence and optical map data.</title>
        <authorList>
            <person name="Kawahara Y."/>
            <person name="de la Bastide M."/>
            <person name="Hamilton J.P."/>
            <person name="Kanamori H."/>
            <person name="McCombie W.R."/>
            <person name="Ouyang S."/>
            <person name="Schwartz D.C."/>
            <person name="Tanaka T."/>
            <person name="Wu J."/>
            <person name="Zhou S."/>
            <person name="Childs K.L."/>
            <person name="Davidson R.M."/>
            <person name="Lin H."/>
            <person name="Quesada-Ocampo L."/>
            <person name="Vaillancourt B."/>
            <person name="Sakai H."/>
            <person name="Lee S.S."/>
            <person name="Kim J."/>
            <person name="Numa H."/>
            <person name="Itoh T."/>
            <person name="Buell C.R."/>
            <person name="Matsumoto T."/>
        </authorList>
    </citation>
    <scope>GENOME REANNOTATION</scope>
    <source>
        <strain>cv. Nipponbare</strain>
    </source>
</reference>
<reference key="5">
    <citation type="journal article" date="2005" name="PLoS Biol.">
        <title>The genomes of Oryza sativa: a history of duplications.</title>
        <authorList>
            <person name="Yu J."/>
            <person name="Wang J."/>
            <person name="Lin W."/>
            <person name="Li S."/>
            <person name="Li H."/>
            <person name="Zhou J."/>
            <person name="Ni P."/>
            <person name="Dong W."/>
            <person name="Hu S."/>
            <person name="Zeng C."/>
            <person name="Zhang J."/>
            <person name="Zhang Y."/>
            <person name="Li R."/>
            <person name="Xu Z."/>
            <person name="Li S."/>
            <person name="Li X."/>
            <person name="Zheng H."/>
            <person name="Cong L."/>
            <person name="Lin L."/>
            <person name="Yin J."/>
            <person name="Geng J."/>
            <person name="Li G."/>
            <person name="Shi J."/>
            <person name="Liu J."/>
            <person name="Lv H."/>
            <person name="Li J."/>
            <person name="Wang J."/>
            <person name="Deng Y."/>
            <person name="Ran L."/>
            <person name="Shi X."/>
            <person name="Wang X."/>
            <person name="Wu Q."/>
            <person name="Li C."/>
            <person name="Ren X."/>
            <person name="Wang J."/>
            <person name="Wang X."/>
            <person name="Li D."/>
            <person name="Liu D."/>
            <person name="Zhang X."/>
            <person name="Ji Z."/>
            <person name="Zhao W."/>
            <person name="Sun Y."/>
            <person name="Zhang Z."/>
            <person name="Bao J."/>
            <person name="Han Y."/>
            <person name="Dong L."/>
            <person name="Ji J."/>
            <person name="Chen P."/>
            <person name="Wu S."/>
            <person name="Liu J."/>
            <person name="Xiao Y."/>
            <person name="Bu D."/>
            <person name="Tan J."/>
            <person name="Yang L."/>
            <person name="Ye C."/>
            <person name="Zhang J."/>
            <person name="Xu J."/>
            <person name="Zhou Y."/>
            <person name="Yu Y."/>
            <person name="Zhang B."/>
            <person name="Zhuang S."/>
            <person name="Wei H."/>
            <person name="Liu B."/>
            <person name="Lei M."/>
            <person name="Yu H."/>
            <person name="Li Y."/>
            <person name="Xu H."/>
            <person name="Wei S."/>
            <person name="He X."/>
            <person name="Fang L."/>
            <person name="Zhang Z."/>
            <person name="Zhang Y."/>
            <person name="Huang X."/>
            <person name="Su Z."/>
            <person name="Tong W."/>
            <person name="Li J."/>
            <person name="Tong Z."/>
            <person name="Li S."/>
            <person name="Ye J."/>
            <person name="Wang L."/>
            <person name="Fang L."/>
            <person name="Lei T."/>
            <person name="Chen C.-S."/>
            <person name="Chen H.-C."/>
            <person name="Xu Z."/>
            <person name="Li H."/>
            <person name="Huang H."/>
            <person name="Zhang F."/>
            <person name="Xu H."/>
            <person name="Li N."/>
            <person name="Zhao C."/>
            <person name="Li S."/>
            <person name="Dong L."/>
            <person name="Huang Y."/>
            <person name="Li L."/>
            <person name="Xi Y."/>
            <person name="Qi Q."/>
            <person name="Li W."/>
            <person name="Zhang B."/>
            <person name="Hu W."/>
            <person name="Zhang Y."/>
            <person name="Tian X."/>
            <person name="Jiao Y."/>
            <person name="Liang X."/>
            <person name="Jin J."/>
            <person name="Gao L."/>
            <person name="Zheng W."/>
            <person name="Hao B."/>
            <person name="Liu S.-M."/>
            <person name="Wang W."/>
            <person name="Yuan L."/>
            <person name="Cao M."/>
            <person name="McDermott J."/>
            <person name="Samudrala R."/>
            <person name="Wang J."/>
            <person name="Wong G.K.-S."/>
            <person name="Yang H."/>
        </authorList>
    </citation>
    <scope>NUCLEOTIDE SEQUENCE [LARGE SCALE GENOMIC DNA]</scope>
    <source>
        <strain>cv. Nipponbare</strain>
    </source>
</reference>
<reference key="6">
    <citation type="journal article" date="2011" name="J. Exp. Bot.">
        <title>Spatial expression and regulation of rice high-affinity nitrate transporters by nitrogen and carbon status.</title>
        <authorList>
            <person name="Feng H."/>
            <person name="Yan M."/>
            <person name="Fan X."/>
            <person name="Li B."/>
            <person name="Shen Q."/>
            <person name="Miller A.J."/>
            <person name="Xu G."/>
        </authorList>
    </citation>
    <scope>TISSUE SPECIFICITY</scope>
    <scope>INDUCTION</scope>
</reference>
<reference key="7">
    <citation type="journal article" date="2011" name="Plant Cell Environ.">
        <title>Rice OsNAR2.1 interacts with OsNRT2.1, OsNRT2.2 and OsNRT2.3a nitrate transporters to provide uptake over high and low concentration ranges.</title>
        <authorList>
            <person name="Yan M."/>
            <person name="Fan X."/>
            <person name="Feng H."/>
            <person name="Miller A.J."/>
            <person name="Shen Q."/>
            <person name="Xu G."/>
        </authorList>
    </citation>
    <scope>INDUCTION</scope>
</reference>
<feature type="chain" id="PRO_0000430007" description="Probable high-affinity nitrate transporter 2.4">
    <location>
        <begin position="1"/>
        <end position="485"/>
    </location>
</feature>
<feature type="transmembrane region" description="Helical" evidence="2">
    <location>
        <begin position="56"/>
        <end position="76"/>
    </location>
</feature>
<feature type="transmembrane region" description="Helical" evidence="2">
    <location>
        <begin position="80"/>
        <end position="100"/>
    </location>
</feature>
<feature type="transmembrane region" description="Helical" evidence="2">
    <location>
        <begin position="119"/>
        <end position="139"/>
    </location>
</feature>
<feature type="transmembrane region" description="Helical" evidence="2">
    <location>
        <begin position="147"/>
        <end position="167"/>
    </location>
</feature>
<feature type="transmembrane region" description="Helical" evidence="2">
    <location>
        <begin position="177"/>
        <end position="197"/>
    </location>
</feature>
<feature type="transmembrane region" description="Helical" evidence="2">
    <location>
        <begin position="215"/>
        <end position="235"/>
    </location>
</feature>
<feature type="transmembrane region" description="Helical" evidence="2">
    <location>
        <begin position="270"/>
        <end position="290"/>
    </location>
</feature>
<feature type="transmembrane region" description="Helical" evidence="2">
    <location>
        <begin position="305"/>
        <end position="327"/>
    </location>
</feature>
<feature type="transmembrane region" description="Helical" evidence="2">
    <location>
        <begin position="341"/>
        <end position="361"/>
    </location>
</feature>
<feature type="transmembrane region" description="Helical" evidence="2">
    <location>
        <begin position="377"/>
        <end position="397"/>
    </location>
</feature>
<feature type="transmembrane region" description="Helical" evidence="2">
    <location>
        <begin position="405"/>
        <end position="425"/>
    </location>
</feature>
<feature type="transmembrane region" description="Helical" evidence="2">
    <location>
        <begin position="435"/>
        <end position="455"/>
    </location>
</feature>
<evidence type="ECO:0000250" key="1"/>
<evidence type="ECO:0000255" key="2"/>
<evidence type="ECO:0000269" key="3">
    <source>
    </source>
</evidence>
<evidence type="ECO:0000269" key="4">
    <source>
    </source>
</evidence>
<evidence type="ECO:0000305" key="5"/>
<comment type="function">
    <text evidence="1">Involved in nitrate transport.</text>
</comment>
<comment type="subcellular location">
    <subcellularLocation>
        <location evidence="5">Cell membrane</location>
        <topology evidence="5">Multi-pass membrane protein</topology>
    </subcellularLocation>
</comment>
<comment type="tissue specificity">
    <text evidence="3">Expressed in the base of the lateral root primordia, root-shoot junction zone, leaves, ends of the husk and vascular tissue of the anthers.</text>
</comment>
<comment type="induction">
    <text evidence="3 4">Circadian-regulation with a peak in the middle of the morning. Induced by nitrate and sucrose in roots. Down-regulated by glutamine, gluatamate, asparagine and aspartate in roots.</text>
</comment>
<comment type="similarity">
    <text evidence="5">Belongs to the major facilitator superfamily. Nitrate/nitrite porter (TC 2.A.1.8) family.</text>
</comment>
<comment type="sequence caution" evidence="5">
    <conflict type="erroneous gene model prediction">
        <sequence resource="EMBL-CDS" id="EAZ12277"/>
    </conflict>
</comment>
<dbReference type="EMBL" id="AP004231">
    <property type="status" value="NOT_ANNOTATED_CDS"/>
    <property type="molecule type" value="Genomic_DNA"/>
</dbReference>
<dbReference type="EMBL" id="AP008207">
    <property type="status" value="NOT_ANNOTATED_CDS"/>
    <property type="molecule type" value="Genomic_DNA"/>
</dbReference>
<dbReference type="EMBL" id="AP014957">
    <property type="status" value="NOT_ANNOTATED_CDS"/>
    <property type="molecule type" value="Genomic_DNA"/>
</dbReference>
<dbReference type="EMBL" id="CM000138">
    <property type="protein sequence ID" value="EAZ12277.1"/>
    <property type="status" value="ALT_SEQ"/>
    <property type="molecule type" value="Genomic_DNA"/>
</dbReference>
<dbReference type="SMR" id="A2ZU80"/>
<dbReference type="STRING" id="39947.A2ZU80"/>
<dbReference type="PaxDb" id="39947-A2ZU80"/>
<dbReference type="EnsemblPlants" id="Os01t0547600-01">
    <property type="protein sequence ID" value="Os01t0547600-01"/>
    <property type="gene ID" value="Os01g0547600"/>
</dbReference>
<dbReference type="GeneID" id="107277478"/>
<dbReference type="Gramene" id="Os01t0547600-01">
    <property type="protein sequence ID" value="Os01t0547600-01"/>
    <property type="gene ID" value="Os01g0547600"/>
</dbReference>
<dbReference type="KEGG" id="osa:107277478"/>
<dbReference type="eggNOG" id="ENOG502R19F">
    <property type="taxonomic scope" value="Eukaryota"/>
</dbReference>
<dbReference type="InParanoid" id="A2ZU80"/>
<dbReference type="OrthoDB" id="434240at2759"/>
<dbReference type="Proteomes" id="UP000000763">
    <property type="component" value="Chromosome 1"/>
</dbReference>
<dbReference type="Proteomes" id="UP000007752">
    <property type="component" value="Chromosome 1"/>
</dbReference>
<dbReference type="Proteomes" id="UP000059680">
    <property type="component" value="Chromosome 1"/>
</dbReference>
<dbReference type="GO" id="GO:0005886">
    <property type="term" value="C:plasma membrane"/>
    <property type="evidence" value="ECO:0007669"/>
    <property type="project" value="UniProtKB-SubCell"/>
</dbReference>
<dbReference type="GO" id="GO:0015112">
    <property type="term" value="F:nitrate transmembrane transporter activity"/>
    <property type="evidence" value="ECO:0007669"/>
    <property type="project" value="InterPro"/>
</dbReference>
<dbReference type="GO" id="GO:0042128">
    <property type="term" value="P:nitrate assimilation"/>
    <property type="evidence" value="ECO:0007669"/>
    <property type="project" value="UniProtKB-KW"/>
</dbReference>
<dbReference type="CDD" id="cd17341">
    <property type="entry name" value="MFS_NRT2_like"/>
    <property type="match status" value="1"/>
</dbReference>
<dbReference type="FunFam" id="1.20.1250.20:FF:000053">
    <property type="entry name" value="Nitrate transporter 2.1"/>
    <property type="match status" value="1"/>
</dbReference>
<dbReference type="FunFam" id="1.20.1250.20:FF:000411">
    <property type="entry name" value="Probable high-affinity nitrate transporter 2.4"/>
    <property type="match status" value="1"/>
</dbReference>
<dbReference type="Gene3D" id="1.20.1250.20">
    <property type="entry name" value="MFS general substrate transporter like domains"/>
    <property type="match status" value="2"/>
</dbReference>
<dbReference type="InterPro" id="IPR011701">
    <property type="entry name" value="MFS"/>
</dbReference>
<dbReference type="InterPro" id="IPR036259">
    <property type="entry name" value="MFS_trans_sf"/>
</dbReference>
<dbReference type="InterPro" id="IPR044772">
    <property type="entry name" value="NO3_transporter"/>
</dbReference>
<dbReference type="PANTHER" id="PTHR23515">
    <property type="entry name" value="HIGH-AFFINITY NITRATE TRANSPORTER 2.3"/>
    <property type="match status" value="1"/>
</dbReference>
<dbReference type="Pfam" id="PF07690">
    <property type="entry name" value="MFS_1"/>
    <property type="match status" value="1"/>
</dbReference>
<dbReference type="SUPFAM" id="SSF103473">
    <property type="entry name" value="MFS general substrate transporter"/>
    <property type="match status" value="1"/>
</dbReference>
<organism>
    <name type="scientific">Oryza sativa subsp. japonica</name>
    <name type="common">Rice</name>
    <dbReference type="NCBI Taxonomy" id="39947"/>
    <lineage>
        <taxon>Eukaryota</taxon>
        <taxon>Viridiplantae</taxon>
        <taxon>Streptophyta</taxon>
        <taxon>Embryophyta</taxon>
        <taxon>Tracheophyta</taxon>
        <taxon>Spermatophyta</taxon>
        <taxon>Magnoliopsida</taxon>
        <taxon>Liliopsida</taxon>
        <taxon>Poales</taxon>
        <taxon>Poaceae</taxon>
        <taxon>BOP clade</taxon>
        <taxon>Oryzoideae</taxon>
        <taxon>Oryzeae</taxon>
        <taxon>Oryzinae</taxon>
        <taxon>Oryza</taxon>
        <taxon>Oryza sativa</taxon>
    </lineage>
</organism>
<gene>
    <name type="primary">NRT2.4</name>
    <name type="ordered locus">Os01g0547600</name>
    <name type="ordered locus">LOC_Os01g36720</name>
    <name type="ORF">OsJ_02167</name>
    <name type="ORF">OSJNBa0026J14</name>
</gene>
<keyword id="KW-1003">Cell membrane</keyword>
<keyword id="KW-0472">Membrane</keyword>
<keyword id="KW-0534">Nitrate assimilation</keyword>
<keyword id="KW-1185">Reference proteome</keyword>
<keyword id="KW-0812">Transmembrane</keyword>
<keyword id="KW-1133">Transmembrane helix</keyword>
<sequence length="485" mass="50199">MVAMEKKTKLVEEEDGCYYYDYGGYGDGVVDDEGRATELRPMALSRPHTQAFHLAWMSLFACFFAAFAAPPILPAMRPALVLAPSDASAAAVASLSATLVGRLAMGPACDLLGPRRASGVASLVCALALALAAVFASSPAGFVALRFVAGLSLANFVANQHWMSRIFAPSAVGLANAVAAGWANVGSAAAQVVMPVAYDAVVLRLGVPVTVAWRVTYLLPCAMLVTTGLAVLAFPYDLPGGGGGRCPGGGGGRRRSFWAVVRGGVGDYRAWLLGLTYGHCYGVELIMENVAADFFRRRFRLPMEAAGAAAACFGAMNAVARPAGGVASDEVARRFGMRGRLWALWAVQSAGAALCVLVGRMGAAEAPSLAATVAVMVACAAFVQAASGLTFGIVPFVCKRSLGVVSGMTASGGAVGAIVTNRLFFSGSRYTVEEAISCTGITSLLCTLPVALIHFRRQGGMFCGPSATIDGDGDVDDDDDYMLLK</sequence>
<accession>A2ZU80</accession>
<name>NRT24_ORYSJ</name>
<proteinExistence type="evidence at transcript level"/>